<sequence length="186" mass="21396">MSVREVYQKIEPRMKKTIEAFQHEIASIRTGKATTALLDRVKVEAYGQQMPLKQVGNISVLDVHTLIVQIWDKSMVSATERAIRDANLGLNPAADGQNIRVSIPPLTEERRKEFVKLTKKFGEDSKVSLRNLRRDMIQEIEKLEKSKAISEDDKNKGKKDADEMLHKFEKQLTELIVHKEKEIMEV</sequence>
<keyword id="KW-0963">Cytoplasm</keyword>
<keyword id="KW-0648">Protein biosynthesis</keyword>
<keyword id="KW-1185">Reference proteome</keyword>
<comment type="function">
    <text evidence="1">Responsible for the release of ribosomes from messenger RNA at the termination of protein biosynthesis. May increase the efficiency of translation by recycling ribosomes from one round of translation to another.</text>
</comment>
<comment type="subcellular location">
    <subcellularLocation>
        <location evidence="1">Cytoplasm</location>
    </subcellularLocation>
</comment>
<comment type="similarity">
    <text evidence="1">Belongs to the RRF family.</text>
</comment>
<feature type="chain" id="PRO_1000090765" description="Ribosome-recycling factor">
    <location>
        <begin position="1"/>
        <end position="186"/>
    </location>
</feature>
<reference key="1">
    <citation type="submission" date="2008-06" db="EMBL/GenBank/DDBJ databases">
        <title>Complete sequence of Pelodictyon phaeoclathratiforme BU-1.</title>
        <authorList>
            <consortium name="US DOE Joint Genome Institute"/>
            <person name="Lucas S."/>
            <person name="Copeland A."/>
            <person name="Lapidus A."/>
            <person name="Glavina del Rio T."/>
            <person name="Dalin E."/>
            <person name="Tice H."/>
            <person name="Bruce D."/>
            <person name="Goodwin L."/>
            <person name="Pitluck S."/>
            <person name="Schmutz J."/>
            <person name="Larimer F."/>
            <person name="Land M."/>
            <person name="Hauser L."/>
            <person name="Kyrpides N."/>
            <person name="Mikhailova N."/>
            <person name="Liu Z."/>
            <person name="Li T."/>
            <person name="Zhao F."/>
            <person name="Overmann J."/>
            <person name="Bryant D.A."/>
            <person name="Richardson P."/>
        </authorList>
    </citation>
    <scope>NUCLEOTIDE SEQUENCE [LARGE SCALE GENOMIC DNA]</scope>
    <source>
        <strain>DSM 5477 / BU-1</strain>
    </source>
</reference>
<organism>
    <name type="scientific">Pelodictyon phaeoclathratiforme (strain DSM 5477 / BU-1)</name>
    <dbReference type="NCBI Taxonomy" id="324925"/>
    <lineage>
        <taxon>Bacteria</taxon>
        <taxon>Pseudomonadati</taxon>
        <taxon>Chlorobiota</taxon>
        <taxon>Chlorobiia</taxon>
        <taxon>Chlorobiales</taxon>
        <taxon>Chlorobiaceae</taxon>
        <taxon>Chlorobium/Pelodictyon group</taxon>
        <taxon>Pelodictyon</taxon>
    </lineage>
</organism>
<gene>
    <name evidence="1" type="primary">frr</name>
    <name type="ordered locus">Ppha_2403</name>
</gene>
<protein>
    <recommendedName>
        <fullName evidence="1">Ribosome-recycling factor</fullName>
        <shortName evidence="1">RRF</shortName>
    </recommendedName>
    <alternativeName>
        <fullName evidence="1">Ribosome-releasing factor</fullName>
    </alternativeName>
</protein>
<evidence type="ECO:0000255" key="1">
    <source>
        <dbReference type="HAMAP-Rule" id="MF_00040"/>
    </source>
</evidence>
<name>RRF_PELPB</name>
<dbReference type="EMBL" id="CP001110">
    <property type="protein sequence ID" value="ACF44592.1"/>
    <property type="molecule type" value="Genomic_DNA"/>
</dbReference>
<dbReference type="RefSeq" id="WP_012509066.1">
    <property type="nucleotide sequence ID" value="NC_011060.1"/>
</dbReference>
<dbReference type="SMR" id="B4SER6"/>
<dbReference type="STRING" id="324925.Ppha_2403"/>
<dbReference type="KEGG" id="pph:Ppha_2403"/>
<dbReference type="eggNOG" id="COG0233">
    <property type="taxonomic scope" value="Bacteria"/>
</dbReference>
<dbReference type="HOGENOM" id="CLU_073981_2_0_10"/>
<dbReference type="OrthoDB" id="9804006at2"/>
<dbReference type="Proteomes" id="UP000002724">
    <property type="component" value="Chromosome"/>
</dbReference>
<dbReference type="GO" id="GO:0005737">
    <property type="term" value="C:cytoplasm"/>
    <property type="evidence" value="ECO:0007669"/>
    <property type="project" value="UniProtKB-SubCell"/>
</dbReference>
<dbReference type="GO" id="GO:0043023">
    <property type="term" value="F:ribosomal large subunit binding"/>
    <property type="evidence" value="ECO:0007669"/>
    <property type="project" value="TreeGrafter"/>
</dbReference>
<dbReference type="GO" id="GO:0006415">
    <property type="term" value="P:translational termination"/>
    <property type="evidence" value="ECO:0007669"/>
    <property type="project" value="UniProtKB-UniRule"/>
</dbReference>
<dbReference type="CDD" id="cd00520">
    <property type="entry name" value="RRF"/>
    <property type="match status" value="1"/>
</dbReference>
<dbReference type="FunFam" id="3.30.1360.40:FF:000001">
    <property type="entry name" value="Ribosome-recycling factor"/>
    <property type="match status" value="1"/>
</dbReference>
<dbReference type="Gene3D" id="3.30.1360.40">
    <property type="match status" value="1"/>
</dbReference>
<dbReference type="Gene3D" id="1.10.132.20">
    <property type="entry name" value="Ribosome-recycling factor"/>
    <property type="match status" value="1"/>
</dbReference>
<dbReference type="HAMAP" id="MF_00040">
    <property type="entry name" value="RRF"/>
    <property type="match status" value="1"/>
</dbReference>
<dbReference type="InterPro" id="IPR002661">
    <property type="entry name" value="Ribosome_recyc_fac"/>
</dbReference>
<dbReference type="InterPro" id="IPR023584">
    <property type="entry name" value="Ribosome_recyc_fac_dom"/>
</dbReference>
<dbReference type="InterPro" id="IPR036191">
    <property type="entry name" value="RRF_sf"/>
</dbReference>
<dbReference type="NCBIfam" id="TIGR00496">
    <property type="entry name" value="frr"/>
    <property type="match status" value="1"/>
</dbReference>
<dbReference type="PANTHER" id="PTHR20982:SF3">
    <property type="entry name" value="MITOCHONDRIAL RIBOSOME RECYCLING FACTOR PSEUDO 1"/>
    <property type="match status" value="1"/>
</dbReference>
<dbReference type="PANTHER" id="PTHR20982">
    <property type="entry name" value="RIBOSOME RECYCLING FACTOR"/>
    <property type="match status" value="1"/>
</dbReference>
<dbReference type="Pfam" id="PF01765">
    <property type="entry name" value="RRF"/>
    <property type="match status" value="1"/>
</dbReference>
<dbReference type="SUPFAM" id="SSF55194">
    <property type="entry name" value="Ribosome recycling factor, RRF"/>
    <property type="match status" value="1"/>
</dbReference>
<proteinExistence type="inferred from homology"/>
<accession>B4SER6</accession>